<comment type="function">
    <text evidence="1">One of two assembly initiator proteins, it binds directly to the 5'-end of the 23S rRNA, where it nucleates assembly of the 50S subunit.</text>
</comment>
<comment type="function">
    <text evidence="1">One of the proteins that surrounds the polypeptide exit tunnel on the outside of the subunit.</text>
</comment>
<comment type="subunit">
    <text evidence="1">Part of the 50S ribosomal subunit.</text>
</comment>
<comment type="similarity">
    <text evidence="1">Belongs to the universal ribosomal protein uL24 family.</text>
</comment>
<sequence>MAKVHVRRTDKVVVISGKDKGKVSEVLAVYPKTSKVLVKDANVVTKHVKPNRENMQGGIVKKEAPMNSSKVMLYCTNCNSATRISKKLLEDGTKVRVCKKCGEIL</sequence>
<keyword id="KW-1185">Reference proteome</keyword>
<keyword id="KW-0687">Ribonucleoprotein</keyword>
<keyword id="KW-0689">Ribosomal protein</keyword>
<keyword id="KW-0694">RNA-binding</keyword>
<keyword id="KW-0699">rRNA-binding</keyword>
<organism>
    <name type="scientific">Clostridium novyi (strain NT)</name>
    <dbReference type="NCBI Taxonomy" id="386415"/>
    <lineage>
        <taxon>Bacteria</taxon>
        <taxon>Bacillati</taxon>
        <taxon>Bacillota</taxon>
        <taxon>Clostridia</taxon>
        <taxon>Eubacteriales</taxon>
        <taxon>Clostridiaceae</taxon>
        <taxon>Clostridium</taxon>
    </lineage>
</organism>
<dbReference type="EMBL" id="CP000382">
    <property type="protein sequence ID" value="ABK61762.1"/>
    <property type="molecule type" value="Genomic_DNA"/>
</dbReference>
<dbReference type="RefSeq" id="WP_003367871.1">
    <property type="nucleotide sequence ID" value="NC_008593.1"/>
</dbReference>
<dbReference type="SMR" id="A0PXV7"/>
<dbReference type="STRING" id="386415.NT01CX_1126"/>
<dbReference type="KEGG" id="cno:NT01CX_1126"/>
<dbReference type="eggNOG" id="COG0198">
    <property type="taxonomic scope" value="Bacteria"/>
</dbReference>
<dbReference type="HOGENOM" id="CLU_093315_2_3_9"/>
<dbReference type="Proteomes" id="UP000008220">
    <property type="component" value="Chromosome"/>
</dbReference>
<dbReference type="GO" id="GO:1990904">
    <property type="term" value="C:ribonucleoprotein complex"/>
    <property type="evidence" value="ECO:0007669"/>
    <property type="project" value="UniProtKB-KW"/>
</dbReference>
<dbReference type="GO" id="GO:0005840">
    <property type="term" value="C:ribosome"/>
    <property type="evidence" value="ECO:0007669"/>
    <property type="project" value="UniProtKB-KW"/>
</dbReference>
<dbReference type="GO" id="GO:0019843">
    <property type="term" value="F:rRNA binding"/>
    <property type="evidence" value="ECO:0007669"/>
    <property type="project" value="UniProtKB-UniRule"/>
</dbReference>
<dbReference type="GO" id="GO:0003735">
    <property type="term" value="F:structural constituent of ribosome"/>
    <property type="evidence" value="ECO:0007669"/>
    <property type="project" value="InterPro"/>
</dbReference>
<dbReference type="GO" id="GO:0006412">
    <property type="term" value="P:translation"/>
    <property type="evidence" value="ECO:0007669"/>
    <property type="project" value="UniProtKB-UniRule"/>
</dbReference>
<dbReference type="CDD" id="cd06089">
    <property type="entry name" value="KOW_RPL26"/>
    <property type="match status" value="1"/>
</dbReference>
<dbReference type="FunFam" id="2.30.30.30:FF:000004">
    <property type="entry name" value="50S ribosomal protein L24"/>
    <property type="match status" value="1"/>
</dbReference>
<dbReference type="Gene3D" id="2.30.30.30">
    <property type="match status" value="1"/>
</dbReference>
<dbReference type="HAMAP" id="MF_01326_B">
    <property type="entry name" value="Ribosomal_uL24_B"/>
    <property type="match status" value="1"/>
</dbReference>
<dbReference type="InterPro" id="IPR005824">
    <property type="entry name" value="KOW"/>
</dbReference>
<dbReference type="InterPro" id="IPR014722">
    <property type="entry name" value="Rib_uL2_dom2"/>
</dbReference>
<dbReference type="InterPro" id="IPR003256">
    <property type="entry name" value="Ribosomal_uL24"/>
</dbReference>
<dbReference type="InterPro" id="IPR041988">
    <property type="entry name" value="Ribosomal_uL24_KOW"/>
</dbReference>
<dbReference type="InterPro" id="IPR008991">
    <property type="entry name" value="Translation_prot_SH3-like_sf"/>
</dbReference>
<dbReference type="NCBIfam" id="TIGR01079">
    <property type="entry name" value="rplX_bact"/>
    <property type="match status" value="1"/>
</dbReference>
<dbReference type="PANTHER" id="PTHR12903">
    <property type="entry name" value="MITOCHONDRIAL RIBOSOMAL PROTEIN L24"/>
    <property type="match status" value="1"/>
</dbReference>
<dbReference type="Pfam" id="PF00467">
    <property type="entry name" value="KOW"/>
    <property type="match status" value="1"/>
</dbReference>
<dbReference type="Pfam" id="PF17136">
    <property type="entry name" value="ribosomal_L24"/>
    <property type="match status" value="1"/>
</dbReference>
<dbReference type="SUPFAM" id="SSF50104">
    <property type="entry name" value="Translation proteins SH3-like domain"/>
    <property type="match status" value="1"/>
</dbReference>
<accession>A0PXV7</accession>
<protein>
    <recommendedName>
        <fullName evidence="1">Large ribosomal subunit protein uL24</fullName>
    </recommendedName>
    <alternativeName>
        <fullName evidence="2">50S ribosomal protein L24</fullName>
    </alternativeName>
</protein>
<evidence type="ECO:0000255" key="1">
    <source>
        <dbReference type="HAMAP-Rule" id="MF_01326"/>
    </source>
</evidence>
<evidence type="ECO:0000305" key="2"/>
<feature type="chain" id="PRO_0000355666" description="Large ribosomal subunit protein uL24">
    <location>
        <begin position="1"/>
        <end position="105"/>
    </location>
</feature>
<name>RL24_CLONN</name>
<gene>
    <name evidence="1" type="primary">rplX</name>
    <name type="ordered locus">NT01CX_1126</name>
</gene>
<proteinExistence type="inferred from homology"/>
<reference key="1">
    <citation type="journal article" date="2006" name="Nat. Biotechnol.">
        <title>The genome and transcriptomes of the anti-tumor agent Clostridium novyi-NT.</title>
        <authorList>
            <person name="Bettegowda C."/>
            <person name="Huang X."/>
            <person name="Lin J."/>
            <person name="Cheong I."/>
            <person name="Kohli M."/>
            <person name="Szabo S.A."/>
            <person name="Zhang X."/>
            <person name="Diaz L.A. Jr."/>
            <person name="Velculescu V.E."/>
            <person name="Parmigiani G."/>
            <person name="Kinzler K.W."/>
            <person name="Vogelstein B."/>
            <person name="Zhou S."/>
        </authorList>
    </citation>
    <scope>NUCLEOTIDE SEQUENCE [LARGE SCALE GENOMIC DNA]</scope>
    <source>
        <strain>NT</strain>
    </source>
</reference>